<evidence type="ECO:0000255" key="1"/>
<evidence type="ECO:0000303" key="2">
    <source>
    </source>
</evidence>
<evidence type="ECO:0000305" key="3"/>
<evidence type="ECO:0000305" key="4">
    <source>
    </source>
</evidence>
<evidence type="ECO:0000312" key="5">
    <source>
        <dbReference type="EMBL" id="ADZ76485.1"/>
    </source>
</evidence>
<comment type="function">
    <text evidence="3">Probable neurotoxin.</text>
</comment>
<comment type="subcellular location">
    <subcellularLocation>
        <location evidence="4">Secreted</location>
    </subcellularLocation>
</comment>
<comment type="tissue specificity">
    <text evidence="4">Expressed by the venom duct.</text>
</comment>
<comment type="domain">
    <text evidence="3">The cysteine framework is XXVIII (C-C-C-CC-C-C-C-C-C).</text>
</comment>
<comment type="PTM">
    <text evidence="3">Contains 5 disulfide bonds.</text>
</comment>
<comment type="similarity">
    <text evidence="3">Belongs to the conotoxin D superfamily.</text>
</comment>
<dbReference type="EMBL" id="HM003927">
    <property type="protein sequence ID" value="ADZ76485.1"/>
    <property type="molecule type" value="mRNA"/>
</dbReference>
<dbReference type="GO" id="GO:0005576">
    <property type="term" value="C:extracellular region"/>
    <property type="evidence" value="ECO:0007669"/>
    <property type="project" value="UniProtKB-SubCell"/>
</dbReference>
<dbReference type="GO" id="GO:0090729">
    <property type="term" value="F:toxin activity"/>
    <property type="evidence" value="ECO:0007669"/>
    <property type="project" value="UniProtKB-KW"/>
</dbReference>
<accession>F6JWU8</accession>
<sequence>MPKLEMMLLVLLILPLCYIDAVGPPPPWNMEDEIIEHWQKLHCHEISDPTPWILCSPEPLCGGKGCCAQEVCDCSGPVCTCPPCL</sequence>
<keyword id="KW-1015">Disulfide bond</keyword>
<keyword id="KW-0528">Neurotoxin</keyword>
<keyword id="KW-0964">Secreted</keyword>
<keyword id="KW-0732">Signal</keyword>
<keyword id="KW-0800">Toxin</keyword>
<proteinExistence type="inferred from homology"/>
<protein>
    <recommendedName>
        <fullName evidence="2">Conotoxin Lt28.2</fullName>
    </recommendedName>
    <alternativeName>
        <fullName evidence="5">Conotoxin Lt15.3</fullName>
    </alternativeName>
</protein>
<name>CDS2_CONLT</name>
<feature type="signal peptide" evidence="1">
    <location>
        <begin position="1"/>
        <end position="21"/>
    </location>
</feature>
<feature type="propeptide" id="PRO_0000451013" evidence="4">
    <location>
        <begin position="22"/>
        <end position="40"/>
    </location>
</feature>
<feature type="chain" id="PRO_5003342675" description="Conotoxin Lt28.2" evidence="4">
    <location>
        <begin position="41"/>
        <end position="85"/>
    </location>
</feature>
<reference key="1">
    <citation type="journal article" date="2017" name="Peptides">
        <title>Cloning, expression and functional characterization of a D-superfamily conotoxin Lt28.1 with previously undescribed cysteine pattern.</title>
        <authorList>
            <person name="Lu J."/>
            <person name="Zhang K."/>
            <person name="Wang S."/>
            <person name="Sun T."/>
            <person name="Yu S."/>
            <person name="Dai Q."/>
            <person name="Liu Z."/>
        </authorList>
    </citation>
    <scope>NUCLEOTIDE SEQUENCE [MRNA]</scope>
    <source>
        <tissue>Venom duct</tissue>
    </source>
</reference>
<organism>
    <name type="scientific">Conus litteratus</name>
    <name type="common">Lettered cone</name>
    <dbReference type="NCBI Taxonomy" id="89445"/>
    <lineage>
        <taxon>Eukaryota</taxon>
        <taxon>Metazoa</taxon>
        <taxon>Spiralia</taxon>
        <taxon>Lophotrochozoa</taxon>
        <taxon>Mollusca</taxon>
        <taxon>Gastropoda</taxon>
        <taxon>Caenogastropoda</taxon>
        <taxon>Neogastropoda</taxon>
        <taxon>Conoidea</taxon>
        <taxon>Conidae</taxon>
        <taxon>Conus</taxon>
        <taxon>Elisaconus</taxon>
    </lineage>
</organism>